<gene>
    <name evidence="1" type="primary">flgH</name>
    <name type="ordered locus">VS_0807</name>
</gene>
<accession>B7VKM5</accession>
<organism>
    <name type="scientific">Vibrio atlanticus (strain LGP32)</name>
    <name type="common">Vibrio splendidus (strain Mel32)</name>
    <dbReference type="NCBI Taxonomy" id="575788"/>
    <lineage>
        <taxon>Bacteria</taxon>
        <taxon>Pseudomonadati</taxon>
        <taxon>Pseudomonadota</taxon>
        <taxon>Gammaproteobacteria</taxon>
        <taxon>Vibrionales</taxon>
        <taxon>Vibrionaceae</taxon>
        <taxon>Vibrio</taxon>
    </lineage>
</organism>
<reference key="1">
    <citation type="submission" date="2009-02" db="EMBL/GenBank/DDBJ databases">
        <title>Vibrio splendidus str. LGP32 complete genome.</title>
        <authorList>
            <person name="Mazel D."/>
            <person name="Le Roux F."/>
        </authorList>
    </citation>
    <scope>NUCLEOTIDE SEQUENCE [LARGE SCALE GENOMIC DNA]</scope>
    <source>
        <strain>LGP32</strain>
    </source>
</reference>
<proteinExistence type="inferred from homology"/>
<name>FLGH_VIBA3</name>
<evidence type="ECO:0000255" key="1">
    <source>
        <dbReference type="HAMAP-Rule" id="MF_00415"/>
    </source>
</evidence>
<feature type="signal peptide" evidence="1">
    <location>
        <begin position="1"/>
        <end position="15"/>
    </location>
</feature>
<feature type="chain" id="PRO_1000134835" description="Flagellar L-ring protein">
    <location>
        <begin position="16"/>
        <end position="258"/>
    </location>
</feature>
<feature type="lipid moiety-binding region" description="N-palmitoyl cysteine" evidence="1">
    <location>
        <position position="16"/>
    </location>
</feature>
<feature type="lipid moiety-binding region" description="S-diacylglycerol cysteine" evidence="1">
    <location>
        <position position="16"/>
    </location>
</feature>
<keyword id="KW-0975">Bacterial flagellum</keyword>
<keyword id="KW-0998">Cell outer membrane</keyword>
<keyword id="KW-0449">Lipoprotein</keyword>
<keyword id="KW-0472">Membrane</keyword>
<keyword id="KW-0564">Palmitate</keyword>
<keyword id="KW-0732">Signal</keyword>
<comment type="function">
    <text evidence="1">Assembles around the rod to form the L-ring and probably protects the motor/basal body from shearing forces during rotation.</text>
</comment>
<comment type="subunit">
    <text evidence="1">The basal body constitutes a major portion of the flagellar organelle and consists of four rings (L,P,S, and M) mounted on a central rod.</text>
</comment>
<comment type="subcellular location">
    <subcellularLocation>
        <location evidence="1">Cell outer membrane</location>
        <topology evidence="1">Lipid-anchor</topology>
    </subcellularLocation>
    <subcellularLocation>
        <location evidence="1">Bacterial flagellum basal body</location>
    </subcellularLocation>
</comment>
<comment type="similarity">
    <text evidence="1">Belongs to the FlgH family.</text>
</comment>
<dbReference type="EMBL" id="FM954972">
    <property type="protein sequence ID" value="CAV17797.1"/>
    <property type="molecule type" value="Genomic_DNA"/>
</dbReference>
<dbReference type="SMR" id="B7VKM5"/>
<dbReference type="STRING" id="575788.VS_0807"/>
<dbReference type="KEGG" id="vsp:VS_0807"/>
<dbReference type="eggNOG" id="COG2063">
    <property type="taxonomic scope" value="Bacteria"/>
</dbReference>
<dbReference type="HOGENOM" id="CLU_069313_0_2_6"/>
<dbReference type="Proteomes" id="UP000009100">
    <property type="component" value="Chromosome 1"/>
</dbReference>
<dbReference type="GO" id="GO:0009427">
    <property type="term" value="C:bacterial-type flagellum basal body, distal rod, L ring"/>
    <property type="evidence" value="ECO:0007669"/>
    <property type="project" value="InterPro"/>
</dbReference>
<dbReference type="GO" id="GO:0009279">
    <property type="term" value="C:cell outer membrane"/>
    <property type="evidence" value="ECO:0007669"/>
    <property type="project" value="UniProtKB-SubCell"/>
</dbReference>
<dbReference type="GO" id="GO:0003774">
    <property type="term" value="F:cytoskeletal motor activity"/>
    <property type="evidence" value="ECO:0007669"/>
    <property type="project" value="InterPro"/>
</dbReference>
<dbReference type="GO" id="GO:0071973">
    <property type="term" value="P:bacterial-type flagellum-dependent cell motility"/>
    <property type="evidence" value="ECO:0007669"/>
    <property type="project" value="InterPro"/>
</dbReference>
<dbReference type="HAMAP" id="MF_00415">
    <property type="entry name" value="FlgH"/>
    <property type="match status" value="1"/>
</dbReference>
<dbReference type="InterPro" id="IPR000527">
    <property type="entry name" value="Flag_Lring"/>
</dbReference>
<dbReference type="NCBIfam" id="NF001302">
    <property type="entry name" value="PRK00249.1-2"/>
    <property type="match status" value="1"/>
</dbReference>
<dbReference type="PANTHER" id="PTHR34933">
    <property type="entry name" value="FLAGELLAR L-RING PROTEIN"/>
    <property type="match status" value="1"/>
</dbReference>
<dbReference type="PANTHER" id="PTHR34933:SF1">
    <property type="entry name" value="FLAGELLAR L-RING PROTEIN"/>
    <property type="match status" value="1"/>
</dbReference>
<dbReference type="Pfam" id="PF02107">
    <property type="entry name" value="FlgH"/>
    <property type="match status" value="1"/>
</dbReference>
<dbReference type="PRINTS" id="PR01008">
    <property type="entry name" value="FLGLRINGFLGH"/>
</dbReference>
<dbReference type="PROSITE" id="PS51257">
    <property type="entry name" value="PROKAR_LIPOPROTEIN"/>
    <property type="match status" value="1"/>
</dbReference>
<sequence length="258" mass="27869">MKRIVCLALFLSMTGCTTLEPIETPAQENATTVVDAVEGDKAAQESSGIIDTLRDRTDPIAGDPAWAPINPKKKQEHYAAATGSLFNANHIGSMYDDSKPRGIGDIITVALDENTRATKKANADMSKSNDASMEPLAVGGENLELGKYNFSYDLSNTNTFAGDASANQSNSISGYITVEVIEVLANGNLVVRGEKWMTLNTGDEYIRLSGTIRPDDIDFENTIASNRVSNARIQYSGTGVQKDMQEPGFLARFFNVSL</sequence>
<protein>
    <recommendedName>
        <fullName evidence="1">Flagellar L-ring protein</fullName>
    </recommendedName>
    <alternativeName>
        <fullName evidence="1">Basal body L-ring protein</fullName>
    </alternativeName>
</protein>